<comment type="function">
    <text evidence="1">Involved in the generation of biological rhythms. The biological cycle depends on the rhythmic formation and nuclear localization of the tim-per complex. Light induces the degradation of tim, which promotes elimination of per. Nuclear activity of the heterodimer coordinatively regulates per and tim transcription negative feedback loop. Behaves as a negative element in circadian transcriptional loop. Does not appear to bind DNA, suggesting indirect transcriptional inhibition (By similarity). Expression exhibits prominent circadian variation in adult heads and in particular in the photoreceptor nuclei.</text>
</comment>
<comment type="subunit">
    <text evidence="1">Forms a heterodimer with timeless (TIM); the complex then translocates into the nucleus.</text>
</comment>
<comment type="subcellular location">
    <subcellularLocation>
        <location>Nucleus</location>
    </subcellularLocation>
    <text evidence="1">Nuclear at specific periods of the day. Interaction with TIM is required for nuclear localization (By similarity).</text>
</comment>
<comment type="PTM">
    <text evidence="1">Phosphorylated with a circadian rhythmicity.</text>
</comment>
<gene>
    <name type="primary">per</name>
</gene>
<name>PER_ANTPE</name>
<dbReference type="EMBL" id="U12769">
    <property type="protein sequence ID" value="AAA64675.1"/>
    <property type="molecule type" value="mRNA"/>
</dbReference>
<dbReference type="SMR" id="Q17062"/>
<dbReference type="GO" id="GO:0005737">
    <property type="term" value="C:cytoplasm"/>
    <property type="evidence" value="ECO:0007669"/>
    <property type="project" value="TreeGrafter"/>
</dbReference>
<dbReference type="GO" id="GO:0005634">
    <property type="term" value="C:nucleus"/>
    <property type="evidence" value="ECO:0007669"/>
    <property type="project" value="UniProtKB-SubCell"/>
</dbReference>
<dbReference type="GO" id="GO:0000976">
    <property type="term" value="F:transcription cis-regulatory region binding"/>
    <property type="evidence" value="ECO:0007669"/>
    <property type="project" value="TreeGrafter"/>
</dbReference>
<dbReference type="GO" id="GO:0001222">
    <property type="term" value="F:transcription corepressor binding"/>
    <property type="evidence" value="ECO:0007669"/>
    <property type="project" value="TreeGrafter"/>
</dbReference>
<dbReference type="GO" id="GO:0032922">
    <property type="term" value="P:circadian regulation of gene expression"/>
    <property type="evidence" value="ECO:0007669"/>
    <property type="project" value="TreeGrafter"/>
</dbReference>
<dbReference type="GO" id="GO:0043153">
    <property type="term" value="P:entrainment of circadian clock by photoperiod"/>
    <property type="evidence" value="ECO:0007669"/>
    <property type="project" value="TreeGrafter"/>
</dbReference>
<dbReference type="GO" id="GO:0000122">
    <property type="term" value="P:negative regulation of transcription by RNA polymerase II"/>
    <property type="evidence" value="ECO:0007669"/>
    <property type="project" value="TreeGrafter"/>
</dbReference>
<dbReference type="CDD" id="cd00130">
    <property type="entry name" value="PAS"/>
    <property type="match status" value="2"/>
</dbReference>
<dbReference type="Gene3D" id="3.30.450.20">
    <property type="entry name" value="PAS domain"/>
    <property type="match status" value="2"/>
</dbReference>
<dbReference type="Gene3D" id="1.20.5.770">
    <property type="entry name" value="Single helix bin"/>
    <property type="match status" value="1"/>
</dbReference>
<dbReference type="InterPro" id="IPR000014">
    <property type="entry name" value="PAS"/>
</dbReference>
<dbReference type="InterPro" id="IPR035965">
    <property type="entry name" value="PAS-like_dom_sf"/>
</dbReference>
<dbReference type="InterPro" id="IPR013767">
    <property type="entry name" value="PAS_fold"/>
</dbReference>
<dbReference type="InterPro" id="IPR050760">
    <property type="entry name" value="Period_circadian_regulator"/>
</dbReference>
<dbReference type="PANTHER" id="PTHR11269">
    <property type="entry name" value="PERIOD CIRCADIAN PROTEIN"/>
    <property type="match status" value="1"/>
</dbReference>
<dbReference type="PANTHER" id="PTHR11269:SF16">
    <property type="entry name" value="PERIOD CIRCADIAN PROTEIN"/>
    <property type="match status" value="1"/>
</dbReference>
<dbReference type="Pfam" id="PF00989">
    <property type="entry name" value="PAS"/>
    <property type="match status" value="1"/>
</dbReference>
<dbReference type="Pfam" id="PF14598">
    <property type="entry name" value="PAS_11"/>
    <property type="match status" value="1"/>
</dbReference>
<dbReference type="SMART" id="SM00091">
    <property type="entry name" value="PAS"/>
    <property type="match status" value="2"/>
</dbReference>
<dbReference type="SUPFAM" id="SSF55785">
    <property type="entry name" value="PYP-like sensor domain (PAS domain)"/>
    <property type="match status" value="2"/>
</dbReference>
<dbReference type="PROSITE" id="PS50112">
    <property type="entry name" value="PAS"/>
    <property type="match status" value="2"/>
</dbReference>
<accession>Q17062</accession>
<sequence>MNNMDGSENNAKVSDSAYSNSCSNSQSRRSHSSKSTHSGSNSSGSSGYGGQPSTSSSSNDLSDQKKEKELKKKKQVETLMPDTQIEVECRPEEDVINIPSEEGGAADDVLVPSPKQTLQTDNDIADIEVAIPDTNNDKEEAIVYNTSLINPGTACPFGRPALSNCNGFSCVISMHDGVVLYATASLTSTLGFPKDMWVGRSFIDFVHPRDRNTFASQITNELAIPKIVSLTEETDQTMENPGSTMVCRIRRYRGLSCGFSVKNTTTAYLPFLLKFKFKNVNEDKGNVIYLVIQAVPFFSAFKTSNEVLAKTVSFVIRHSADGNLEYIDAESVPYLGYLPQDITNRDALLLYHPGDLGYLQEIYGSLVKEGNVTRSKTYRMMTQNGHYMKVETEWSAFINPWSKKLEFVTGKHYIIEGPANPDVFQNPENVLKLTEEQKNQAKMYRDSIIRIMKDVLTKPAEIAKQQMSKRCQDLAHFMEMLIEEQPKPVDDLRLEIQDADHSYYERDSVILGGISPHHEYDSKSSTETPLSYNQLNYNDNLQRYFNSHQSNAFVDNNLLPSRNPLYLSAPHFSESIKNVPSAMEYSGDVIDLTGPGETSGVIVFNKSPTMGLKTGKPIRLTESSLTKHNAEMEKELMKIHREHRCYSKGDRVKVSNEARQKKKEHLARCNAGFQTISAANNTPSVYEKPHNLKRSSKQMESEPIANKHHCPSSRQFRRKQTTCSGGFAQPPSATNPVSTSSQWSSSPVNNVNPFILGVRMQPPMPILSPLPVVSGMFPMYYTPVTATVTTSEGRPSEPNYHRNNMNNNQFQQPLGNSRLPTTICVIQCGTSRIIHSFRGTRTTGGTRYT</sequence>
<keyword id="KW-0090">Biological rhythms</keyword>
<keyword id="KW-0539">Nucleus</keyword>
<keyword id="KW-0597">Phosphoprotein</keyword>
<keyword id="KW-0677">Repeat</keyword>
<reference key="1">
    <citation type="journal article" date="1994" name="Neuron">
        <title>Cloning of a structural and functional homolog of the circadian clock gene period from the giant silkmoth Antheraea pernyi.</title>
        <authorList>
            <person name="Reppert S.M."/>
            <person name="Tsai T."/>
            <person name="Roca A.L."/>
            <person name="Sauman I."/>
        </authorList>
    </citation>
    <scope>NUCLEOTIDE SEQUENCE [MRNA]</scope>
    <source>
        <tissue>Head</tissue>
        <tissue>Thorax</tissue>
    </source>
</reference>
<organism>
    <name type="scientific">Antheraea pernyi</name>
    <name type="common">Chinese oak silk moth</name>
    <name type="synonym">Bombyx pernyi</name>
    <dbReference type="NCBI Taxonomy" id="7119"/>
    <lineage>
        <taxon>Eukaryota</taxon>
        <taxon>Metazoa</taxon>
        <taxon>Ecdysozoa</taxon>
        <taxon>Arthropoda</taxon>
        <taxon>Hexapoda</taxon>
        <taxon>Insecta</taxon>
        <taxon>Pterygota</taxon>
        <taxon>Neoptera</taxon>
        <taxon>Endopterygota</taxon>
        <taxon>Lepidoptera</taxon>
        <taxon>Glossata</taxon>
        <taxon>Ditrysia</taxon>
        <taxon>Bombycoidea</taxon>
        <taxon>Saturniidae</taxon>
        <taxon>Saturniinae</taxon>
        <taxon>Saturniini</taxon>
        <taxon>Antheraea</taxon>
    </lineage>
</organism>
<proteinExistence type="evidence at transcript level"/>
<feature type="chain" id="PRO_0000162616" description="Period circadian protein">
    <location>
        <begin position="1"/>
        <end position="849"/>
    </location>
</feature>
<feature type="domain" description="PAS 1" evidence="3">
    <location>
        <begin position="166"/>
        <end position="296"/>
    </location>
</feature>
<feature type="domain" description="PAS 2" evidence="3">
    <location>
        <begin position="314"/>
        <end position="416"/>
    </location>
</feature>
<feature type="region of interest" description="Disordered" evidence="4">
    <location>
        <begin position="1"/>
        <end position="79"/>
    </location>
</feature>
<feature type="region of interest" description="Disordered" evidence="4">
    <location>
        <begin position="680"/>
        <end position="746"/>
    </location>
</feature>
<feature type="short sequence motif" description="Nuclear localization signal" evidence="2">
    <location>
        <begin position="63"/>
        <end position="74"/>
    </location>
</feature>
<feature type="compositionally biased region" description="Polar residues" evidence="4">
    <location>
        <begin position="1"/>
        <end position="13"/>
    </location>
</feature>
<feature type="compositionally biased region" description="Low complexity" evidence="4">
    <location>
        <begin position="14"/>
        <end position="27"/>
    </location>
</feature>
<feature type="compositionally biased region" description="Low complexity" evidence="4">
    <location>
        <begin position="35"/>
        <end position="58"/>
    </location>
</feature>
<feature type="compositionally biased region" description="Basic residues" evidence="4">
    <location>
        <begin position="706"/>
        <end position="720"/>
    </location>
</feature>
<feature type="compositionally biased region" description="Low complexity" evidence="4">
    <location>
        <begin position="735"/>
        <end position="746"/>
    </location>
</feature>
<protein>
    <recommendedName>
        <fullName>Period circadian protein</fullName>
    </recommendedName>
</protein>
<evidence type="ECO:0000250" key="1"/>
<evidence type="ECO:0000255" key="2"/>
<evidence type="ECO:0000255" key="3">
    <source>
        <dbReference type="PROSITE-ProRule" id="PRU00140"/>
    </source>
</evidence>
<evidence type="ECO:0000256" key="4">
    <source>
        <dbReference type="SAM" id="MobiDB-lite"/>
    </source>
</evidence>